<evidence type="ECO:0000250" key="1">
    <source>
        <dbReference type="UniProtKB" id="Q9UQR1"/>
    </source>
</evidence>
<evidence type="ECO:0000255" key="2">
    <source>
        <dbReference type="PROSITE-ProRule" id="PRU00042"/>
    </source>
</evidence>
<evidence type="ECO:0000256" key="3">
    <source>
        <dbReference type="SAM" id="MobiDB-lite"/>
    </source>
</evidence>
<evidence type="ECO:0000269" key="4">
    <source>
    </source>
</evidence>
<evidence type="ECO:0000269" key="5">
    <source>
    </source>
</evidence>
<evidence type="ECO:0000269" key="6">
    <source>
    </source>
</evidence>
<evidence type="ECO:0000269" key="7">
    <source>
    </source>
</evidence>
<evidence type="ECO:0000305" key="8"/>
<evidence type="ECO:0007744" key="9">
    <source>
    </source>
</evidence>
<dbReference type="EMBL" id="X98096">
    <property type="protein sequence ID" value="CAA66725.1"/>
    <property type="molecule type" value="mRNA"/>
</dbReference>
<dbReference type="EMBL" id="BC026144">
    <property type="protein sequence ID" value="AAH26144.1"/>
    <property type="molecule type" value="mRNA"/>
</dbReference>
<dbReference type="EMBL" id="U80078">
    <property type="protein sequence ID" value="AAB38507.1"/>
    <property type="molecule type" value="mRNA"/>
</dbReference>
<dbReference type="CCDS" id="CCDS28130.1"/>
<dbReference type="RefSeq" id="NP_035879.1">
    <property type="nucleotide sequence ID" value="NM_011749.4"/>
</dbReference>
<dbReference type="RefSeq" id="XP_006522165.1">
    <property type="nucleotide sequence ID" value="XM_006522102.3"/>
</dbReference>
<dbReference type="RefSeq" id="XP_017172469.1">
    <property type="nucleotide sequence ID" value="XM_017316980.1"/>
</dbReference>
<dbReference type="SMR" id="Q61624"/>
<dbReference type="BioGRID" id="204640">
    <property type="interactions" value="11"/>
</dbReference>
<dbReference type="FunCoup" id="Q61624">
    <property type="interactions" value="4843"/>
</dbReference>
<dbReference type="IntAct" id="Q61624">
    <property type="interactions" value="1"/>
</dbReference>
<dbReference type="MINT" id="Q61624"/>
<dbReference type="STRING" id="10090.ENSMUSP00000126338"/>
<dbReference type="GlyGen" id="Q61624">
    <property type="glycosylation" value="2 sites, 1 O-linked glycan (2 sites)"/>
</dbReference>
<dbReference type="iPTMnet" id="Q61624"/>
<dbReference type="PhosphoSitePlus" id="Q61624"/>
<dbReference type="jPOST" id="Q61624"/>
<dbReference type="PaxDb" id="10090-ENSMUSP00000126338"/>
<dbReference type="ProteomicsDB" id="302076"/>
<dbReference type="Pumba" id="Q61624"/>
<dbReference type="Antibodypedia" id="901">
    <property type="antibodies" value="247 antibodies from 29 providers"/>
</dbReference>
<dbReference type="DNASU" id="22661"/>
<dbReference type="Ensembl" id="ENSMUST00000089677.7">
    <property type="protein sequence ID" value="ENSMUSP00000087106.7"/>
    <property type="gene ID" value="ENSMUSG00000022811.18"/>
</dbReference>
<dbReference type="Ensembl" id="ENSMUST00000165418.9">
    <property type="protein sequence ID" value="ENSMUSP00000126338.2"/>
    <property type="gene ID" value="ENSMUSG00000022811.18"/>
</dbReference>
<dbReference type="GeneID" id="22661"/>
<dbReference type="KEGG" id="mmu:22661"/>
<dbReference type="UCSC" id="uc007zab.1">
    <property type="organism name" value="mouse"/>
</dbReference>
<dbReference type="AGR" id="MGI:1332234"/>
<dbReference type="CTD" id="22661"/>
<dbReference type="MGI" id="MGI:1332234">
    <property type="gene designation" value="Zfp148"/>
</dbReference>
<dbReference type="VEuPathDB" id="HostDB:ENSMUSG00000022811"/>
<dbReference type="eggNOG" id="KOG1721">
    <property type="taxonomic scope" value="Eukaryota"/>
</dbReference>
<dbReference type="GeneTree" id="ENSGT00940000157406"/>
<dbReference type="HOGENOM" id="CLU_025987_1_0_1"/>
<dbReference type="InParanoid" id="Q61624"/>
<dbReference type="OMA" id="QPMNTEI"/>
<dbReference type="OrthoDB" id="8117402at2759"/>
<dbReference type="PhylomeDB" id="Q61624"/>
<dbReference type="TreeFam" id="TF331779"/>
<dbReference type="BioGRID-ORCS" id="22661">
    <property type="hits" value="7 hits in 80 CRISPR screens"/>
</dbReference>
<dbReference type="ChiTaRS" id="Zfp148">
    <property type="organism name" value="mouse"/>
</dbReference>
<dbReference type="PRO" id="PR:Q61624"/>
<dbReference type="Proteomes" id="UP000000589">
    <property type="component" value="Chromosome 16"/>
</dbReference>
<dbReference type="RNAct" id="Q61624">
    <property type="molecule type" value="protein"/>
</dbReference>
<dbReference type="Bgee" id="ENSMUSG00000022811">
    <property type="expression patterns" value="Expressed in rostral migratory stream and 254 other cell types or tissues"/>
</dbReference>
<dbReference type="ExpressionAtlas" id="Q61624">
    <property type="expression patterns" value="baseline and differential"/>
</dbReference>
<dbReference type="GO" id="GO:0005794">
    <property type="term" value="C:Golgi apparatus"/>
    <property type="evidence" value="ECO:0007669"/>
    <property type="project" value="Ensembl"/>
</dbReference>
<dbReference type="GO" id="GO:0005654">
    <property type="term" value="C:nucleoplasm"/>
    <property type="evidence" value="ECO:0007669"/>
    <property type="project" value="Ensembl"/>
</dbReference>
<dbReference type="GO" id="GO:0005634">
    <property type="term" value="C:nucleus"/>
    <property type="evidence" value="ECO:0000314"/>
    <property type="project" value="MGI"/>
</dbReference>
<dbReference type="GO" id="GO:0003700">
    <property type="term" value="F:DNA-binding transcription factor activity"/>
    <property type="evidence" value="ECO:0000314"/>
    <property type="project" value="MGI"/>
</dbReference>
<dbReference type="GO" id="GO:0001227">
    <property type="term" value="F:DNA-binding transcription repressor activity, RNA polymerase II-specific"/>
    <property type="evidence" value="ECO:0007669"/>
    <property type="project" value="Ensembl"/>
</dbReference>
<dbReference type="GO" id="GO:0000978">
    <property type="term" value="F:RNA polymerase II cis-regulatory region sequence-specific DNA binding"/>
    <property type="evidence" value="ECO:0000314"/>
    <property type="project" value="MGI"/>
</dbReference>
<dbReference type="GO" id="GO:0008270">
    <property type="term" value="F:zinc ion binding"/>
    <property type="evidence" value="ECO:0007669"/>
    <property type="project" value="UniProtKB-KW"/>
</dbReference>
<dbReference type="GO" id="GO:0007276">
    <property type="term" value="P:gamete generation"/>
    <property type="evidence" value="ECO:0000315"/>
    <property type="project" value="MGI"/>
</dbReference>
<dbReference type="GO" id="GO:0010629">
    <property type="term" value="P:negative regulation of gene expression"/>
    <property type="evidence" value="ECO:0007669"/>
    <property type="project" value="Ensembl"/>
</dbReference>
<dbReference type="GO" id="GO:0045944">
    <property type="term" value="P:positive regulation of transcription by RNA polymerase II"/>
    <property type="evidence" value="ECO:0000314"/>
    <property type="project" value="MGI"/>
</dbReference>
<dbReference type="FunFam" id="3.30.160.60:FF:004830">
    <property type="match status" value="1"/>
</dbReference>
<dbReference type="FunFam" id="3.30.160.60:FF:000067">
    <property type="entry name" value="Vascular endothelial zinc finger 1"/>
    <property type="match status" value="1"/>
</dbReference>
<dbReference type="FunFam" id="3.30.160.60:FF:000042">
    <property type="entry name" value="Zinc finger protein 148"/>
    <property type="match status" value="2"/>
</dbReference>
<dbReference type="Gene3D" id="3.30.160.60">
    <property type="entry name" value="Classic Zinc Finger"/>
    <property type="match status" value="4"/>
</dbReference>
<dbReference type="InterPro" id="IPR036236">
    <property type="entry name" value="Znf_C2H2_sf"/>
</dbReference>
<dbReference type="InterPro" id="IPR013087">
    <property type="entry name" value="Znf_C2H2_type"/>
</dbReference>
<dbReference type="PANTHER" id="PTHR23235:SF155">
    <property type="entry name" value="EARLY GROWTH RESPONSE 4-RELATED"/>
    <property type="match status" value="1"/>
</dbReference>
<dbReference type="PANTHER" id="PTHR23235">
    <property type="entry name" value="KRUEPPEL-LIKE TRANSCRIPTION FACTOR"/>
    <property type="match status" value="1"/>
</dbReference>
<dbReference type="Pfam" id="PF00096">
    <property type="entry name" value="zf-C2H2"/>
    <property type="match status" value="3"/>
</dbReference>
<dbReference type="SMART" id="SM00355">
    <property type="entry name" value="ZnF_C2H2"/>
    <property type="match status" value="4"/>
</dbReference>
<dbReference type="SUPFAM" id="SSF57667">
    <property type="entry name" value="beta-beta-alpha zinc fingers"/>
    <property type="match status" value="2"/>
</dbReference>
<dbReference type="PROSITE" id="PS00028">
    <property type="entry name" value="ZINC_FINGER_C2H2_1"/>
    <property type="match status" value="4"/>
</dbReference>
<dbReference type="PROSITE" id="PS50157">
    <property type="entry name" value="ZINC_FINGER_C2H2_2"/>
    <property type="match status" value="4"/>
</dbReference>
<organism>
    <name type="scientific">Mus musculus</name>
    <name type="common">Mouse</name>
    <dbReference type="NCBI Taxonomy" id="10090"/>
    <lineage>
        <taxon>Eukaryota</taxon>
        <taxon>Metazoa</taxon>
        <taxon>Chordata</taxon>
        <taxon>Craniata</taxon>
        <taxon>Vertebrata</taxon>
        <taxon>Euteleostomi</taxon>
        <taxon>Mammalia</taxon>
        <taxon>Eutheria</taxon>
        <taxon>Euarchontoglires</taxon>
        <taxon>Glires</taxon>
        <taxon>Rodentia</taxon>
        <taxon>Myomorpha</taxon>
        <taxon>Muroidea</taxon>
        <taxon>Muridae</taxon>
        <taxon>Murinae</taxon>
        <taxon>Mus</taxon>
        <taxon>Mus</taxon>
    </lineage>
</organism>
<proteinExistence type="evidence at protein level"/>
<accession>Q61624</accession>
<accession>P97475</accession>
<name>ZN148_MOUSE</name>
<feature type="chain" id="PRO_0000047428" description="Zinc finger protein 148">
    <location>
        <begin position="1"/>
        <end position="794"/>
    </location>
</feature>
<feature type="zinc finger region" description="C2H2-type 1" evidence="2">
    <location>
        <begin position="171"/>
        <end position="193"/>
    </location>
</feature>
<feature type="zinc finger region" description="C2H2-type 2" evidence="2">
    <location>
        <begin position="199"/>
        <end position="221"/>
    </location>
</feature>
<feature type="zinc finger region" description="C2H2-type 3" evidence="2">
    <location>
        <begin position="227"/>
        <end position="249"/>
    </location>
</feature>
<feature type="zinc finger region" description="C2H2-type 4" evidence="2">
    <location>
        <begin position="255"/>
        <end position="278"/>
    </location>
</feature>
<feature type="region of interest" description="Disordered" evidence="3">
    <location>
        <begin position="298"/>
        <end position="336"/>
    </location>
</feature>
<feature type="region of interest" description="Disordered" evidence="3">
    <location>
        <begin position="574"/>
        <end position="599"/>
    </location>
</feature>
<feature type="compositionally biased region" description="Basic and acidic residues" evidence="3">
    <location>
        <begin position="321"/>
        <end position="336"/>
    </location>
</feature>
<feature type="compositionally biased region" description="Polar residues" evidence="3">
    <location>
        <begin position="574"/>
        <end position="588"/>
    </location>
</feature>
<feature type="modified residue" description="Phosphoserine" evidence="9">
    <location>
        <position position="51"/>
    </location>
</feature>
<feature type="modified residue" description="Phosphothreonine" evidence="1">
    <location>
        <position position="194"/>
    </location>
</feature>
<feature type="modified residue" description="Phosphoserine" evidence="1">
    <location>
        <position position="250"/>
    </location>
</feature>
<feature type="modified residue" description="Phosphoserine" evidence="9">
    <location>
        <position position="301"/>
    </location>
</feature>
<feature type="modified residue" description="Phosphoserine" evidence="9">
    <location>
        <position position="306"/>
    </location>
</feature>
<feature type="modified residue" description="Phosphoserine" evidence="1">
    <location>
        <position position="412"/>
    </location>
</feature>
<feature type="modified residue" description="N6-acetyllysine" evidence="1">
    <location>
        <position position="607"/>
    </location>
</feature>
<feature type="modified residue" description="Phosphoserine" evidence="1">
    <location>
        <position position="665"/>
    </location>
</feature>
<feature type="modified residue" description="Phosphoserine" evidence="1">
    <location>
        <position position="784"/>
    </location>
</feature>
<feature type="cross-link" description="Glycyl lysine isopeptide (Lys-Gly) (interchain with G-Cter in SUMO2)" evidence="1">
    <location>
        <position position="6"/>
    </location>
</feature>
<feature type="cross-link" description="Glycyl lysine isopeptide (Lys-Gly) (interchain with G-Cter in SUMO2)" evidence="1">
    <location>
        <position position="88"/>
    </location>
</feature>
<feature type="cross-link" description="Glycyl lysine isopeptide (Lys-Gly) (interchain with G-Cter in SUMO2)" evidence="1">
    <location>
        <position position="115"/>
    </location>
</feature>
<feature type="cross-link" description="Glycyl lysine isopeptide (Lys-Gly) (interchain with G-Cter in SUMO2)" evidence="1">
    <location>
        <position position="132"/>
    </location>
</feature>
<feature type="cross-link" description="Glycyl lysine isopeptide (Lys-Gly) (interchain with G-Cter in SUMO2)" evidence="1">
    <location>
        <position position="291"/>
    </location>
</feature>
<feature type="cross-link" description="Glycyl lysine isopeptide (Lys-Gly) (interchain with G-Cter in SUMO2)" evidence="1">
    <location>
        <position position="308"/>
    </location>
</feature>
<feature type="cross-link" description="Glycyl lysine isopeptide (Lys-Gly) (interchain with G-Cter in SUMO1); alternate" evidence="1">
    <location>
        <position position="356"/>
    </location>
</feature>
<feature type="cross-link" description="Glycyl lysine isopeptide (Lys-Gly) (interchain with G-Cter in SUMO2); alternate" evidence="1">
    <location>
        <position position="356"/>
    </location>
</feature>
<feature type="cross-link" description="Glycyl lysine isopeptide (Lys-Gly) (interchain with G-Cter in SUMO2)" evidence="1">
    <location>
        <position position="402"/>
    </location>
</feature>
<feature type="cross-link" description="Glycyl lysine isopeptide (Lys-Gly) (interchain with G-Cter in SUMO2)" evidence="1">
    <location>
        <position position="421"/>
    </location>
</feature>
<feature type="cross-link" description="Glycyl lysine isopeptide (Lys-Gly) (interchain with G-Cter in SUMO2)" evidence="1">
    <location>
        <position position="424"/>
    </location>
</feature>
<feature type="sequence conflict" description="In Ref. 3; AAB38507." evidence="8" ref="3">
    <original>K</original>
    <variation>N</variation>
    <location>
        <position position="283"/>
    </location>
</feature>
<feature type="sequence conflict" description="In Ref. 3; AAB38507." evidence="8" ref="3">
    <original>K</original>
    <variation>P</variation>
    <location>
        <position position="314"/>
    </location>
</feature>
<feature type="sequence conflict" description="In Ref. 3; AAB38507." evidence="8" ref="3">
    <original>K</original>
    <variation>Q</variation>
    <location>
        <position position="319"/>
    </location>
</feature>
<comment type="function">
    <text evidence="7">Involved in transcriptional regulation. Represses the transcription of a number of genes including gastrin, stromelysin and enolase. Binds to the G-rich box in the enhancer region of these genes.</text>
</comment>
<comment type="subunit">
    <text evidence="1 4 5">Interacts with HNRNPDL (By similarity). Interacts with the 5FMC complex; the interaction requires association with CHTOP (PubMed:22872859). Interacts with CAVIN1 (PubMed:10727401).</text>
</comment>
<comment type="subcellular location">
    <subcellularLocation>
        <location>Nucleus</location>
    </subcellularLocation>
</comment>
<comment type="tissue specificity">
    <text evidence="7">Strong expression detected in brain, lung, liver and kidney, with lower levels detected in spleen, skeletal muscle, testis and heart.</text>
</comment>
<comment type="developmental stage">
    <text evidence="6 7">Detected in embryos from 7 dpc to 17 dpc. Expression decreases in developing skeletal muscles.</text>
</comment>
<comment type="PTM">
    <text evidence="5">Sumoylated with SUMO2. Desumoylated by SENP3, resulting in the stimulation of transcription of its target genes.</text>
</comment>
<comment type="similarity">
    <text evidence="8">Belongs to the krueppel C2H2-type zinc-finger protein family.</text>
</comment>
<keyword id="KW-0007">Acetylation</keyword>
<keyword id="KW-0238">DNA-binding</keyword>
<keyword id="KW-1017">Isopeptide bond</keyword>
<keyword id="KW-0479">Metal-binding</keyword>
<keyword id="KW-0539">Nucleus</keyword>
<keyword id="KW-0597">Phosphoprotein</keyword>
<keyword id="KW-1185">Reference proteome</keyword>
<keyword id="KW-0677">Repeat</keyword>
<keyword id="KW-0678">Repressor</keyword>
<keyword id="KW-0804">Transcription</keyword>
<keyword id="KW-0805">Transcription regulation</keyword>
<keyword id="KW-0832">Ubl conjugation</keyword>
<keyword id="KW-0862">Zinc</keyword>
<keyword id="KW-0863">Zinc-finger</keyword>
<gene>
    <name type="primary">Znf148</name>
    <name type="synonym">Zbp89</name>
    <name type="synonym">Zfp148</name>
</gene>
<sequence>MNIDDKLEGLFLKCGGIDEMQSSRAMVVMGGVSGQSAVSGELQESVLQDRSLPHQEILAADEVLQESEMRQQDMISHDELMVHEETVKNDEEQMDTHERLPQGLQYALNVPISVKQEITFTDVSEQLMRDKKQVREPVDLQKKKKRKQRSPAKILTINEDGSLGLKTPKSHVCEHCNAAFRTNYHLQRHVFIHTGEKPFQCSQCDMRFIQKYLLQRHEKIHTGEKPFRCDECGMRFIQKYHMERHKRTHSGEKPYQCEYCLQYFSRTDRVLKHKRMCHENHDKKLNRCAIKGGLLTSEEDSGFSTSPKDNSLPKKKRQKTEKKSSGMDKESVLDKSDLKKDKNDYLPLYSSSTKVKDEYMVAEYAVEMPHSSVGGSHLEDASGEIHPPKLVLKKINSKRSLKQPLEQSQTISPLSSYEDSKVSKYAFELVDKQALLDSEGSADIDQVDNLQEGPSKPVHSSTNYDDAMQFLKKKRYLQAASNNSREYALNVGTIASQPSVTQAAVASVIDESTTASILDSQALNVEIKSNHDKNVIPDEVLQTLLDHYSHKPNGQHEISFSVADTEVTSSISINSSDVPEVTQSENVGSSSQASSSDKANMLQEYSKFLQQALDRTSQNDAYLNSPSLNFVTDNQTLPNPPAFSSIDKQVYAAMPINSFRSGMNSPLRTTPDKSHFGLIVGDSQHPFPFSGDETNHASATSTADFLDQVTSQKKAEAQPVHQAYQMSSFEQPFRAPYHGSRAGIATQFSTANGQVNLRGPGTSAEFSEFPLVNVNDNRAGMTSSPDATTGQTFG</sequence>
<protein>
    <recommendedName>
        <fullName>Zinc finger protein 148</fullName>
    </recommendedName>
    <alternativeName>
        <fullName>Beta enolase repressor factor 1</fullName>
    </alternativeName>
    <alternativeName>
        <fullName>G-rich box-binding protein</fullName>
    </alternativeName>
    <alternativeName>
        <fullName>Transcription factor BFCOL1</fullName>
    </alternativeName>
    <alternativeName>
        <fullName>Transcription factor ZBP-89</fullName>
    </alternativeName>
    <alternativeName>
        <fullName>Zinc finger DNA-binding protein 89</fullName>
    </alternativeName>
</protein>
<reference key="1">
    <citation type="journal article" date="1998" name="J. Biol. Chem.">
        <title>Negative regulation of beta enolase gene transcription in embryonic muscle is dependent upon a zinc finger factor that binds to the G-rich box within the muscle-specific enhancer.</title>
        <authorList>
            <person name="Passantino R."/>
            <person name="Antona V."/>
            <person name="Barbieri G."/>
            <person name="Rubino P."/>
            <person name="Melchionna R."/>
            <person name="Cossu G."/>
            <person name="Feo S."/>
            <person name="Giallongo A."/>
        </authorList>
    </citation>
    <scope>NUCLEOTIDE SEQUENCE [MRNA]</scope>
    <scope>FUNCTION</scope>
    <scope>TISSUE SPECIFICITY</scope>
    <scope>DEVELOPMENTAL STAGE</scope>
    <source>
        <strain>CD-1</strain>
        <tissue>Limb</tissue>
    </source>
</reference>
<reference key="2">
    <citation type="journal article" date="2004" name="Genome Res.">
        <title>The status, quality, and expansion of the NIH full-length cDNA project: the Mammalian Gene Collection (MGC).</title>
        <authorList>
            <consortium name="The MGC Project Team"/>
        </authorList>
    </citation>
    <scope>NUCLEOTIDE SEQUENCE [LARGE SCALE MRNA]</scope>
    <source>
        <strain>Czech II</strain>
        <tissue>Mammary gland</tissue>
    </source>
</reference>
<reference key="3">
    <citation type="journal article" date="1997" name="J. Biol. Chem.">
        <title>Cloning and characterization of a transcription factor that binds to the proximal promoters of the two mouse type I collagen genes.</title>
        <authorList>
            <person name="Hasegawa T."/>
            <person name="Takeuchi A."/>
            <person name="Miyaishi O."/>
            <person name="Isobe K."/>
            <person name="de Crombrugghe B."/>
        </authorList>
    </citation>
    <scope>NUCLEOTIDE SEQUENCE [MRNA] OF 26-794</scope>
</reference>
<reference key="4">
    <citation type="journal article" date="1996" name="Mol. Cell. Biol.">
        <title>ZBP-89, a Kruppel-like zinc finger protein, inhibits epidermal growth factor induction of the gastrin promoter.</title>
        <authorList>
            <person name="Merchant J.L."/>
            <person name="Iyer G.R."/>
            <person name="Taylor B.R."/>
            <person name="Kitchen J.R."/>
            <person name="Mortensen E.R."/>
            <person name="Wang Z."/>
            <person name="Flintoft R.J."/>
            <person name="Michel J."/>
            <person name="Bassel-Duby R."/>
        </authorList>
    </citation>
    <scope>DEVELOPMENTAL STAGE</scope>
    <source>
        <tissue>Pituitary adenoma</tissue>
    </source>
</reference>
<reference key="5">
    <citation type="journal article" date="2000" name="Biochem. J.">
        <title>PTRF (polymerase I and transcript-release factor) is tissue-specific and interacts with the BFCOL1 (binding factor of a type-I collagen promoter) zinc-finger transcription factor which binds to the two mouse type-I collagen gene promoters.</title>
        <authorList>
            <person name="Hasegawa T."/>
            <person name="Takeuchi A."/>
            <person name="Miyaishi O."/>
            <person name="Xiao H."/>
            <person name="Mao J."/>
            <person name="Isobe K."/>
        </authorList>
    </citation>
    <scope>INTERACTION WITH CAVIN1</scope>
</reference>
<reference key="6">
    <citation type="journal article" date="2007" name="Proc. Natl. Acad. Sci. U.S.A.">
        <title>Large-scale phosphorylation analysis of mouse liver.</title>
        <authorList>
            <person name="Villen J."/>
            <person name="Beausoleil S.A."/>
            <person name="Gerber S.A."/>
            <person name="Gygi S.P."/>
        </authorList>
    </citation>
    <scope>IDENTIFICATION BY MASS SPECTROMETRY [LARGE SCALE ANALYSIS]</scope>
    <source>
        <tissue>Liver</tissue>
    </source>
</reference>
<reference key="7">
    <citation type="journal article" date="2010" name="Cell">
        <title>A tissue-specific atlas of mouse protein phosphorylation and expression.</title>
        <authorList>
            <person name="Huttlin E.L."/>
            <person name="Jedrychowski M.P."/>
            <person name="Elias J.E."/>
            <person name="Goswami T."/>
            <person name="Rad R."/>
            <person name="Beausoleil S.A."/>
            <person name="Villen J."/>
            <person name="Haas W."/>
            <person name="Sowa M.E."/>
            <person name="Gygi S.P."/>
        </authorList>
    </citation>
    <scope>PHOSPHORYLATION [LARGE SCALE ANALYSIS] AT SER-51; SER-301 AND SER-306</scope>
    <scope>IDENTIFICATION BY MASS SPECTROMETRY [LARGE SCALE ANALYSIS]</scope>
    <source>
        <tissue>Brain</tissue>
        <tissue>Brown adipose tissue</tissue>
        <tissue>Heart</tissue>
        <tissue>Kidney</tissue>
        <tissue>Liver</tissue>
        <tissue>Lung</tissue>
        <tissue>Spleen</tissue>
    </source>
</reference>
<reference key="8">
    <citation type="journal article" date="2012" name="Mol. Cell. Proteomics">
        <title>Five friends of methylated chromatin target of protein-arginine-methyltransferase[prmt]-1 (chtop), a complex linking arginine methylation to desumoylation.</title>
        <authorList>
            <person name="Fanis P."/>
            <person name="Gillemans N."/>
            <person name="Aghajanirefah A."/>
            <person name="Pourfarzad F."/>
            <person name="Demmers J."/>
            <person name="Esteghamat F."/>
            <person name="Vadlamudi R.K."/>
            <person name="Grosveld F."/>
            <person name="Philipsen S."/>
            <person name="van Dijk T.B."/>
        </authorList>
    </citation>
    <scope>INTERACTION WITH THE 5FMC COMPLEX AND CHTOP</scope>
    <scope>SUMOYLATION</scope>
    <scope>DESUMOYLATION BY SENP3</scope>
</reference>